<evidence type="ECO:0000255" key="1">
    <source>
        <dbReference type="HAMAP-Rule" id="MF_01389"/>
    </source>
</evidence>
<proteinExistence type="inferred from homology"/>
<keyword id="KW-0143">Chaperone</keyword>
<keyword id="KW-0963">Cytoplasm</keyword>
<keyword id="KW-0342">GTP-binding</keyword>
<keyword id="KW-0996">Nickel insertion</keyword>
<keyword id="KW-0547">Nucleotide-binding</keyword>
<accession>B0UBI3</accession>
<dbReference type="EMBL" id="CP000943">
    <property type="protein sequence ID" value="ACA16579.1"/>
    <property type="molecule type" value="Genomic_DNA"/>
</dbReference>
<dbReference type="RefSeq" id="WP_012331988.1">
    <property type="nucleotide sequence ID" value="NC_010511.1"/>
</dbReference>
<dbReference type="SMR" id="B0UBI3"/>
<dbReference type="STRING" id="426117.M446_2117"/>
<dbReference type="KEGG" id="met:M446_2117"/>
<dbReference type="eggNOG" id="COG0378">
    <property type="taxonomic scope" value="Bacteria"/>
</dbReference>
<dbReference type="HOGENOM" id="CLU_072144_1_0_5"/>
<dbReference type="GO" id="GO:0005737">
    <property type="term" value="C:cytoplasm"/>
    <property type="evidence" value="ECO:0007669"/>
    <property type="project" value="UniProtKB-SubCell"/>
</dbReference>
<dbReference type="GO" id="GO:0005525">
    <property type="term" value="F:GTP binding"/>
    <property type="evidence" value="ECO:0007669"/>
    <property type="project" value="UniProtKB-KW"/>
</dbReference>
<dbReference type="GO" id="GO:0003924">
    <property type="term" value="F:GTPase activity"/>
    <property type="evidence" value="ECO:0007669"/>
    <property type="project" value="InterPro"/>
</dbReference>
<dbReference type="GO" id="GO:0016151">
    <property type="term" value="F:nickel cation binding"/>
    <property type="evidence" value="ECO:0007669"/>
    <property type="project" value="UniProtKB-UniRule"/>
</dbReference>
<dbReference type="GO" id="GO:0043419">
    <property type="term" value="P:urea catabolic process"/>
    <property type="evidence" value="ECO:0007669"/>
    <property type="project" value="InterPro"/>
</dbReference>
<dbReference type="CDD" id="cd05540">
    <property type="entry name" value="UreG"/>
    <property type="match status" value="1"/>
</dbReference>
<dbReference type="FunFam" id="3.40.50.300:FF:000208">
    <property type="entry name" value="Urease accessory protein UreG"/>
    <property type="match status" value="1"/>
</dbReference>
<dbReference type="Gene3D" id="3.40.50.300">
    <property type="entry name" value="P-loop containing nucleotide triphosphate hydrolases"/>
    <property type="match status" value="1"/>
</dbReference>
<dbReference type="HAMAP" id="MF_01389">
    <property type="entry name" value="UreG"/>
    <property type="match status" value="1"/>
</dbReference>
<dbReference type="InterPro" id="IPR003495">
    <property type="entry name" value="CobW/HypB/UreG_nucleotide-bd"/>
</dbReference>
<dbReference type="InterPro" id="IPR027417">
    <property type="entry name" value="P-loop_NTPase"/>
</dbReference>
<dbReference type="InterPro" id="IPR004400">
    <property type="entry name" value="UreG"/>
</dbReference>
<dbReference type="NCBIfam" id="TIGR00101">
    <property type="entry name" value="ureG"/>
    <property type="match status" value="1"/>
</dbReference>
<dbReference type="PANTHER" id="PTHR31715">
    <property type="entry name" value="UREASE ACCESSORY PROTEIN G"/>
    <property type="match status" value="1"/>
</dbReference>
<dbReference type="PANTHER" id="PTHR31715:SF0">
    <property type="entry name" value="UREASE ACCESSORY PROTEIN G"/>
    <property type="match status" value="1"/>
</dbReference>
<dbReference type="Pfam" id="PF02492">
    <property type="entry name" value="cobW"/>
    <property type="match status" value="1"/>
</dbReference>
<dbReference type="PIRSF" id="PIRSF005624">
    <property type="entry name" value="Ni-bind_GTPase"/>
    <property type="match status" value="1"/>
</dbReference>
<dbReference type="SUPFAM" id="SSF52540">
    <property type="entry name" value="P-loop containing nucleoside triphosphate hydrolases"/>
    <property type="match status" value="1"/>
</dbReference>
<sequence>MTTPHHGPLRVGIGGPVGSGKTALMEGLCKALRGRFDLCAITNDIYTKEDARLLTVAGALPEERIMGVETGGCPHTAIREDASINLAAVAEMRRRFPSLDLILIESGGDNLAATFSPELADLTLYVIDVAGGEKIPRKGGPGITRSDLLVINKTDLAPLVGADLAVMEADTQRMRGGRPYVFTSLRRGDGVEAVARFVIEAGGL</sequence>
<organism>
    <name type="scientific">Methylobacterium sp. (strain 4-46)</name>
    <dbReference type="NCBI Taxonomy" id="426117"/>
    <lineage>
        <taxon>Bacteria</taxon>
        <taxon>Pseudomonadati</taxon>
        <taxon>Pseudomonadota</taxon>
        <taxon>Alphaproteobacteria</taxon>
        <taxon>Hyphomicrobiales</taxon>
        <taxon>Methylobacteriaceae</taxon>
        <taxon>Methylobacterium</taxon>
    </lineage>
</organism>
<comment type="function">
    <text evidence="1">Facilitates the functional incorporation of the urease nickel metallocenter. This process requires GTP hydrolysis, probably effectuated by UreG.</text>
</comment>
<comment type="subunit">
    <text evidence="1">Homodimer. UreD, UreF and UreG form a complex that acts as a GTP-hydrolysis-dependent molecular chaperone, activating the urease apoprotein by helping to assemble the nickel containing metallocenter of UreC. The UreE protein probably delivers the nickel.</text>
</comment>
<comment type="subcellular location">
    <subcellularLocation>
        <location evidence="1">Cytoplasm</location>
    </subcellularLocation>
</comment>
<comment type="similarity">
    <text evidence="1">Belongs to the SIMIBI class G3E GTPase family. UreG subfamily.</text>
</comment>
<feature type="chain" id="PRO_0000347408" description="Urease accessory protein UreG">
    <location>
        <begin position="1"/>
        <end position="204"/>
    </location>
</feature>
<feature type="binding site" evidence="1">
    <location>
        <begin position="15"/>
        <end position="22"/>
    </location>
    <ligand>
        <name>GTP</name>
        <dbReference type="ChEBI" id="CHEBI:37565"/>
    </ligand>
</feature>
<reference key="1">
    <citation type="submission" date="2008-02" db="EMBL/GenBank/DDBJ databases">
        <title>Complete sequence of chromosome of Methylobacterium sp. 4-46.</title>
        <authorList>
            <consortium name="US DOE Joint Genome Institute"/>
            <person name="Copeland A."/>
            <person name="Lucas S."/>
            <person name="Lapidus A."/>
            <person name="Glavina del Rio T."/>
            <person name="Dalin E."/>
            <person name="Tice H."/>
            <person name="Bruce D."/>
            <person name="Goodwin L."/>
            <person name="Pitluck S."/>
            <person name="Chertkov O."/>
            <person name="Brettin T."/>
            <person name="Detter J.C."/>
            <person name="Han C."/>
            <person name="Kuske C.R."/>
            <person name="Schmutz J."/>
            <person name="Larimer F."/>
            <person name="Land M."/>
            <person name="Hauser L."/>
            <person name="Kyrpides N."/>
            <person name="Ivanova N."/>
            <person name="Marx C.J."/>
            <person name="Richardson P."/>
        </authorList>
    </citation>
    <scope>NUCLEOTIDE SEQUENCE [LARGE SCALE GENOMIC DNA]</scope>
    <source>
        <strain>4-46</strain>
    </source>
</reference>
<name>UREG_METS4</name>
<gene>
    <name evidence="1" type="primary">ureG</name>
    <name type="ordered locus">M446_2117</name>
</gene>
<protein>
    <recommendedName>
        <fullName evidence="1">Urease accessory protein UreG</fullName>
    </recommendedName>
</protein>